<evidence type="ECO:0000250" key="1">
    <source>
        <dbReference type="UniProtKB" id="O14975"/>
    </source>
</evidence>
<evidence type="ECO:0000250" key="2">
    <source>
        <dbReference type="UniProtKB" id="O35488"/>
    </source>
</evidence>
<evidence type="ECO:0000255" key="3"/>
<evidence type="ECO:0000269" key="4">
    <source>
    </source>
</evidence>
<evidence type="ECO:0000269" key="5">
    <source>
    </source>
</evidence>
<evidence type="ECO:0000303" key="6">
    <source>
    </source>
</evidence>
<evidence type="ECO:0000303" key="7">
    <source>
    </source>
</evidence>
<evidence type="ECO:0000305" key="8"/>
<evidence type="ECO:0000305" key="9">
    <source>
    </source>
</evidence>
<evidence type="ECO:0000305" key="10">
    <source>
    </source>
</evidence>
<organism>
    <name type="scientific">Rattus norvegicus</name>
    <name type="common">Rat</name>
    <dbReference type="NCBI Taxonomy" id="10116"/>
    <lineage>
        <taxon>Eukaryota</taxon>
        <taxon>Metazoa</taxon>
        <taxon>Chordata</taxon>
        <taxon>Craniata</taxon>
        <taxon>Vertebrata</taxon>
        <taxon>Euteleostomi</taxon>
        <taxon>Mammalia</taxon>
        <taxon>Eutheria</taxon>
        <taxon>Euarchontoglires</taxon>
        <taxon>Glires</taxon>
        <taxon>Rodentia</taxon>
        <taxon>Myomorpha</taxon>
        <taxon>Muroidea</taxon>
        <taxon>Muridae</taxon>
        <taxon>Murinae</taxon>
        <taxon>Rattus</taxon>
    </lineage>
</organism>
<proteinExistence type="evidence at protein level"/>
<keyword id="KW-0007">Acetylation</keyword>
<keyword id="KW-0067">ATP-binding</keyword>
<keyword id="KW-1003">Cell membrane</keyword>
<keyword id="KW-0903">Direct protein sequencing</keyword>
<keyword id="KW-0256">Endoplasmic reticulum</keyword>
<keyword id="KW-0276">Fatty acid metabolism</keyword>
<keyword id="KW-0436">Ligase</keyword>
<keyword id="KW-0443">Lipid metabolism</keyword>
<keyword id="KW-0445">Lipid transport</keyword>
<keyword id="KW-0472">Membrane</keyword>
<keyword id="KW-0492">Microsome</keyword>
<keyword id="KW-0547">Nucleotide-binding</keyword>
<keyword id="KW-0576">Peroxisome</keyword>
<keyword id="KW-0597">Phosphoprotein</keyword>
<keyword id="KW-1185">Reference proteome</keyword>
<keyword id="KW-0812">Transmembrane</keyword>
<keyword id="KW-1133">Transmembrane helix</keyword>
<keyword id="KW-0813">Transport</keyword>
<sequence>MLPVLYTGLAGLLLLPLLLTCCCPYLLQDVRFFLQLANMARQVRSYRQRRPVRTILHVFLEQARKTPHKPFLLFRDETLTYAQVDRRSNQVARALHDHLGLRQGDCVALFMGNEPAYVWLWLGLLKLGCPMACLNYNIRAKSLLHCFQCCGAKVLLASPELHEAVEEVLPTLKKEGVSVFYVSRTSNTNGVDTVLDKVDGVSADPIPESWRSEVTFTTPAVYIYTSGTTGLPKAATINHHRLWYGTSLALRSGIKAHDVIYTTMPLYHSAALMIGLHGCIVVGATFALRSKFSASQFWDDCRKYNATVIQYIGELLRYLCNTPQKPNDRDHKVKIALGNGLRGDVWREFIKRFGDIHIYEFYASTEGNIGFMNYPRKIGAVGRENYLQKKVVRHELIKYDVEKDEPVRDANGYCIKVPKGEVGLLICKITELTPFFGYAGGKTQTEKKKLRDVFKKGDVYFNSGDLLMIDRENFIYFHDRVGDTFRWKGENVATTEVADIVGLVDFVEEVNVYGVPVPGHEGRIGMASIKMKENYEFNGKKLFQHISEYLPSYSRPRFLRIQDTIEITGTFKHRKVTLMEEGFNPSVIKDTLYFMDDTEKTYVPMTEDIYNAIIDKTLKL</sequence>
<feature type="chain" id="PRO_0000193206" description="Long-chain fatty acid transport protein 2">
    <location>
        <begin position="1"/>
        <end position="620"/>
    </location>
</feature>
<feature type="topological domain" description="Lumenal" evidence="1">
    <location>
        <begin position="1"/>
        <end position="4"/>
    </location>
</feature>
<feature type="transmembrane region" description="Helical" evidence="3">
    <location>
        <begin position="5"/>
        <end position="27"/>
    </location>
</feature>
<feature type="topological domain" description="Cytoplasmic" evidence="1">
    <location>
        <begin position="28"/>
        <end position="106"/>
    </location>
</feature>
<feature type="transmembrane region" description="Helical" evidence="3">
    <location>
        <begin position="107"/>
        <end position="127"/>
    </location>
</feature>
<feature type="topological domain" description="Lumenal" evidence="1">
    <location>
        <begin position="128"/>
        <end position="267"/>
    </location>
</feature>
<feature type="transmembrane region" description="Helical" evidence="3">
    <location>
        <begin position="268"/>
        <end position="288"/>
    </location>
</feature>
<feature type="topological domain" description="Cytoplasmic" evidence="1">
    <location>
        <begin position="289"/>
        <end position="620"/>
    </location>
</feature>
<feature type="binding site" evidence="3">
    <location>
        <begin position="222"/>
        <end position="233"/>
    </location>
    <ligand>
        <name>AMP</name>
        <dbReference type="ChEBI" id="CHEBI:456215"/>
    </ligand>
</feature>
<feature type="modified residue" description="N6-acetyllysine" evidence="2">
    <location>
        <position position="291"/>
    </location>
</feature>
<feature type="modified residue" description="Phosphothreonine" evidence="1">
    <location>
        <position position="577"/>
    </location>
</feature>
<reference key="1">
    <citation type="journal article" date="1996" name="J. Biol. Chem.">
        <title>Molecular cloning of cDNA encoding rat very long-chain acyl-CoA synthetase.</title>
        <authorList>
            <person name="Uchiyama A."/>
            <person name="Aoyama T."/>
            <person name="Kamijo K."/>
            <person name="Uchida Y."/>
            <person name="Kondo N."/>
            <person name="Orii T."/>
            <person name="Hashimoto T."/>
        </authorList>
    </citation>
    <scope>NUCLEOTIDE SEQUENCE [MRNA]</scope>
    <scope>PARTIAL PROTEIN SEQUENCE</scope>
    <scope>FUNCTION</scope>
    <scope>CATALYTIC ACTIVITY</scope>
    <scope>SUBCELLULAR LOCATION</scope>
    <scope>TISSUE SPECIFICITY</scope>
    <source>
        <strain>Wistar</strain>
        <tissue>Liver</tissue>
    </source>
</reference>
<reference key="2">
    <citation type="journal article" date="2000" name="Exp. Cell Res.">
        <title>Intraperoxisomal localization of very-long-chain fatty acyl-CoA synthetase: implication in X-adrenoleukodystrophy.</title>
        <authorList>
            <person name="Smith B.T."/>
            <person name="Sengupta T.K."/>
            <person name="Singh I."/>
        </authorList>
    </citation>
    <scope>FUNCTION</scope>
    <scope>CATALYTIC ACTIVITY</scope>
    <scope>SUBCELLULAR LOCATION</scope>
    <scope>TOPOLOGY</scope>
</reference>
<protein>
    <recommendedName>
        <fullName evidence="8">Long-chain fatty acid transport protein 2</fullName>
    </recommendedName>
    <alternativeName>
        <fullName>Arachidonate--CoA ligase</fullName>
        <ecNumber evidence="2">6.2.1.15</ecNumber>
    </alternativeName>
    <alternativeName>
        <fullName evidence="2">Fatty acid transport protein 2</fullName>
        <shortName evidence="2">FATP-2</shortName>
    </alternativeName>
    <alternativeName>
        <fullName>Fatty-acid-coenzyme A ligase, very long-chain 1</fullName>
    </alternativeName>
    <alternativeName>
        <fullName>Long-chain-fatty-acid--CoA ligase</fullName>
        <ecNumber evidence="5">6.2.1.3</ecNumber>
    </alternativeName>
    <alternativeName>
        <fullName>Phytanate--CoA ligase</fullName>
        <ecNumber evidence="1">6.2.1.24</ecNumber>
    </alternativeName>
    <alternativeName>
        <fullName>Solute carrier family 27 member 2</fullName>
    </alternativeName>
    <alternativeName>
        <fullName>THCA-CoA ligase</fullName>
        <ecNumber evidence="1">6.2.1.7</ecNumber>
    </alternativeName>
    <alternativeName>
        <fullName evidence="6 7">Very long-chain acyl-CoA synthetase</fullName>
        <shortName evidence="6 7">VLACS</shortName>
        <shortName evidence="1">VLCS</shortName>
        <ecNumber evidence="4 5">6.2.1.-</ecNumber>
    </alternativeName>
    <alternativeName>
        <fullName>Very long-chain-fatty-acid-CoA ligase</fullName>
    </alternativeName>
</protein>
<gene>
    <name type="primary">Slc27a2</name>
    <name type="synonym">Acsvl1</name>
    <name type="synonym">Facvl1</name>
    <name type="synonym">Fatp2</name>
    <name type="synonym">Vlacs</name>
    <name type="synonym">Vlcs</name>
</gene>
<name>S27A2_RAT</name>
<comment type="function">
    <text evidence="1 4 5">Mediates the import of long-chain fatty acids (LCFA) into the cell by facilitating their transport across cell membranes, playing an important role in hepatic fatty acid uptake (By similarity). Also functions as an acyl-CoA ligase catalyzing the ATP-dependent formation of fatty acyl-CoA using LCFA and very-long-chain fatty acids (VLCFA) as substrates, which prevents fatty acid efflux from cells and might drive more fatty acid uptake (PubMed:10640429, PubMed:8939997). Plays a pivotal role in regulating available LCFA substrates from exogenous sources in tissues undergoing high levels of beta-oxidation or triglyceride synthesis (PubMed:10640429, PubMed:8939997). Can also activate branched-chain fatty acids such as phytanic acid and pristanic acid (By similarity). May contribute to the synthesis of sphingosine-1-phosphate (By similarity). Does not activate C24 bile acids, cholate and chenodeoxycholate. In vitro, activates 3-alpha,7-alpha,12-alpha-trihydroxy-5-beta-cholestanate (THCA), the C27 precursor of cholic acid deriving from the de novo synthesis from cholesterol. However, it is not critical for THCA activation and bile synthesis in vivo (By similarity).</text>
</comment>
<comment type="catalytic activity">
    <reaction evidence="1">
        <text>a fatty acid(in) = a fatty acid(out)</text>
        <dbReference type="Rhea" id="RHEA:38879"/>
        <dbReference type="ChEBI" id="CHEBI:28868"/>
    </reaction>
</comment>
<comment type="catalytic activity">
    <reaction evidence="1">
        <text>(9Z)-octadecenoate(out) = (9Z)-octadecenoate(in)</text>
        <dbReference type="Rhea" id="RHEA:33655"/>
        <dbReference type="ChEBI" id="CHEBI:30823"/>
    </reaction>
</comment>
<comment type="catalytic activity">
    <reaction evidence="5">
        <text>a long-chain fatty acid + ATP + CoA = a long-chain fatty acyl-CoA + AMP + diphosphate</text>
        <dbReference type="Rhea" id="RHEA:15421"/>
        <dbReference type="ChEBI" id="CHEBI:30616"/>
        <dbReference type="ChEBI" id="CHEBI:33019"/>
        <dbReference type="ChEBI" id="CHEBI:57287"/>
        <dbReference type="ChEBI" id="CHEBI:57560"/>
        <dbReference type="ChEBI" id="CHEBI:83139"/>
        <dbReference type="ChEBI" id="CHEBI:456215"/>
        <dbReference type="EC" id="6.2.1.3"/>
    </reaction>
    <physiologicalReaction direction="left-to-right" evidence="10">
        <dbReference type="Rhea" id="RHEA:15422"/>
    </physiologicalReaction>
</comment>
<comment type="catalytic activity">
    <reaction evidence="2">
        <text>(5Z,8Z,11Z,14Z)-eicosatetraenoate + ATP + CoA = (5Z,8Z,11Z,14Z)-eicosatetraenoyl-CoA + AMP + diphosphate</text>
        <dbReference type="Rhea" id="RHEA:19713"/>
        <dbReference type="ChEBI" id="CHEBI:30616"/>
        <dbReference type="ChEBI" id="CHEBI:32395"/>
        <dbReference type="ChEBI" id="CHEBI:33019"/>
        <dbReference type="ChEBI" id="CHEBI:57287"/>
        <dbReference type="ChEBI" id="CHEBI:57368"/>
        <dbReference type="ChEBI" id="CHEBI:456215"/>
        <dbReference type="EC" id="6.2.1.15"/>
    </reaction>
    <physiologicalReaction direction="left-to-right" evidence="2">
        <dbReference type="Rhea" id="RHEA:19714"/>
    </physiologicalReaction>
</comment>
<comment type="catalytic activity">
    <reaction evidence="1">
        <text>(9Z,12Z,15Z)-octadecatrienoate + ATP + CoA = (9Z,12Z,15Z)-octadecatrienoyl-CoA + AMP + diphosphate</text>
        <dbReference type="Rhea" id="RHEA:44936"/>
        <dbReference type="ChEBI" id="CHEBI:30616"/>
        <dbReference type="ChEBI" id="CHEBI:32387"/>
        <dbReference type="ChEBI" id="CHEBI:33019"/>
        <dbReference type="ChEBI" id="CHEBI:57287"/>
        <dbReference type="ChEBI" id="CHEBI:74034"/>
        <dbReference type="ChEBI" id="CHEBI:456215"/>
    </reaction>
    <physiologicalReaction direction="left-to-right" evidence="1">
        <dbReference type="Rhea" id="RHEA:44937"/>
    </physiologicalReaction>
</comment>
<comment type="catalytic activity">
    <reaction evidence="5">
        <text>hexadecanoate + ATP + CoA = hexadecanoyl-CoA + AMP + diphosphate</text>
        <dbReference type="Rhea" id="RHEA:30751"/>
        <dbReference type="ChEBI" id="CHEBI:7896"/>
        <dbReference type="ChEBI" id="CHEBI:30616"/>
        <dbReference type="ChEBI" id="CHEBI:33019"/>
        <dbReference type="ChEBI" id="CHEBI:57287"/>
        <dbReference type="ChEBI" id="CHEBI:57379"/>
        <dbReference type="ChEBI" id="CHEBI:456215"/>
    </reaction>
    <physiologicalReaction direction="left-to-right" evidence="10">
        <dbReference type="Rhea" id="RHEA:30752"/>
    </physiologicalReaction>
</comment>
<comment type="catalytic activity">
    <reaction evidence="1">
        <text>(9Z)-octadecenoate + ATP + CoA = (9Z)-octadecenoyl-CoA + AMP + diphosphate</text>
        <dbReference type="Rhea" id="RHEA:33607"/>
        <dbReference type="ChEBI" id="CHEBI:30616"/>
        <dbReference type="ChEBI" id="CHEBI:30823"/>
        <dbReference type="ChEBI" id="CHEBI:33019"/>
        <dbReference type="ChEBI" id="CHEBI:57287"/>
        <dbReference type="ChEBI" id="CHEBI:57387"/>
        <dbReference type="ChEBI" id="CHEBI:456215"/>
    </reaction>
    <physiologicalReaction direction="left-to-right" evidence="1">
        <dbReference type="Rhea" id="RHEA:33608"/>
    </physiologicalReaction>
</comment>
<comment type="catalytic activity">
    <reaction evidence="1">
        <text>2,6,10,14-tetramethylpentadecanoate + ATP + CoA = pristanoyl-CoA + AMP + diphosphate</text>
        <dbReference type="Rhea" id="RHEA:47264"/>
        <dbReference type="ChEBI" id="CHEBI:30616"/>
        <dbReference type="ChEBI" id="CHEBI:33019"/>
        <dbReference type="ChEBI" id="CHEBI:57287"/>
        <dbReference type="ChEBI" id="CHEBI:77250"/>
        <dbReference type="ChEBI" id="CHEBI:77268"/>
        <dbReference type="ChEBI" id="CHEBI:456215"/>
    </reaction>
    <physiologicalReaction direction="left-to-right" evidence="1">
        <dbReference type="Rhea" id="RHEA:47265"/>
    </physiologicalReaction>
</comment>
<comment type="catalytic activity">
    <reaction evidence="1">
        <text>(E)-hexadec-2-enoate + ATP + CoA = (2E)-hexadecenoyl-CoA + AMP + diphosphate</text>
        <dbReference type="Rhea" id="RHEA:36139"/>
        <dbReference type="ChEBI" id="CHEBI:30616"/>
        <dbReference type="ChEBI" id="CHEBI:33019"/>
        <dbReference type="ChEBI" id="CHEBI:57287"/>
        <dbReference type="ChEBI" id="CHEBI:61526"/>
        <dbReference type="ChEBI" id="CHEBI:72745"/>
        <dbReference type="ChEBI" id="CHEBI:456215"/>
    </reaction>
    <physiologicalReaction direction="left-to-right" evidence="1">
        <dbReference type="Rhea" id="RHEA:36140"/>
    </physiologicalReaction>
</comment>
<comment type="catalytic activity">
    <reaction evidence="1">
        <text>3,7,11,15-tetramethylhexadecanoate + ATP + CoA = phytanoyl-CoA + AMP + diphosphate</text>
        <dbReference type="Rhea" id="RHEA:21380"/>
        <dbReference type="ChEBI" id="CHEBI:30616"/>
        <dbReference type="ChEBI" id="CHEBI:33019"/>
        <dbReference type="ChEBI" id="CHEBI:37257"/>
        <dbReference type="ChEBI" id="CHEBI:57287"/>
        <dbReference type="ChEBI" id="CHEBI:57391"/>
        <dbReference type="ChEBI" id="CHEBI:456215"/>
        <dbReference type="EC" id="6.2.1.24"/>
    </reaction>
    <physiologicalReaction direction="left-to-right" evidence="1">
        <dbReference type="Rhea" id="RHEA:21381"/>
    </physiologicalReaction>
</comment>
<comment type="catalytic activity">
    <reaction evidence="5 9">
        <text>a very long-chain fatty acid + ATP + CoA = a very long-chain fatty acyl-CoA + AMP + diphosphate</text>
        <dbReference type="Rhea" id="RHEA:54536"/>
        <dbReference type="ChEBI" id="CHEBI:30616"/>
        <dbReference type="ChEBI" id="CHEBI:33019"/>
        <dbReference type="ChEBI" id="CHEBI:57287"/>
        <dbReference type="ChEBI" id="CHEBI:58950"/>
        <dbReference type="ChEBI" id="CHEBI:138261"/>
        <dbReference type="ChEBI" id="CHEBI:456215"/>
    </reaction>
    <physiologicalReaction direction="left-to-right" evidence="9 10">
        <dbReference type="Rhea" id="RHEA:54537"/>
    </physiologicalReaction>
</comment>
<comment type="catalytic activity">
    <reaction evidence="5 9">
        <text>tetracosanoate + ATP + CoA = tetracosanoyl-CoA + AMP + diphosphate</text>
        <dbReference type="Rhea" id="RHEA:33639"/>
        <dbReference type="ChEBI" id="CHEBI:30616"/>
        <dbReference type="ChEBI" id="CHEBI:31014"/>
        <dbReference type="ChEBI" id="CHEBI:33019"/>
        <dbReference type="ChEBI" id="CHEBI:57287"/>
        <dbReference type="ChEBI" id="CHEBI:65052"/>
        <dbReference type="ChEBI" id="CHEBI:456215"/>
    </reaction>
    <physiologicalReaction direction="left-to-right" evidence="9 10">
        <dbReference type="Rhea" id="RHEA:33640"/>
    </physiologicalReaction>
</comment>
<comment type="catalytic activity">
    <reaction evidence="1">
        <text>(4Z,7Z,10Z,13Z,16Z,19Z)-docosahexaenoate + ATP + CoA = (4Z,7Z,10Z,13Z,16Z,19Z)-docosahexaenoyl-CoA + AMP + diphosphate</text>
        <dbReference type="Rhea" id="RHEA:44932"/>
        <dbReference type="ChEBI" id="CHEBI:30616"/>
        <dbReference type="ChEBI" id="CHEBI:33019"/>
        <dbReference type="ChEBI" id="CHEBI:57287"/>
        <dbReference type="ChEBI" id="CHEBI:74298"/>
        <dbReference type="ChEBI" id="CHEBI:77016"/>
        <dbReference type="ChEBI" id="CHEBI:456215"/>
    </reaction>
    <physiologicalReaction direction="left-to-right" evidence="1">
        <dbReference type="Rhea" id="RHEA:44933"/>
    </physiologicalReaction>
</comment>
<comment type="catalytic activity">
    <reaction evidence="1">
        <text>(25R)-3alpha,7alpha,12alpha-trihydroxy-5beta-cholestan-26-oate + ATP + CoA = (25R)-3alpha,7alpha,12alpha-trihydroxy-5beta-cholestan-26-oyl-CoA + AMP + diphosphate</text>
        <dbReference type="Rhea" id="RHEA:22976"/>
        <dbReference type="ChEBI" id="CHEBI:30616"/>
        <dbReference type="ChEBI" id="CHEBI:33019"/>
        <dbReference type="ChEBI" id="CHEBI:57287"/>
        <dbReference type="ChEBI" id="CHEBI:58677"/>
        <dbReference type="ChEBI" id="CHEBI:58734"/>
        <dbReference type="ChEBI" id="CHEBI:456215"/>
        <dbReference type="EC" id="6.2.1.7"/>
    </reaction>
    <physiologicalReaction direction="left-to-right" evidence="1">
        <dbReference type="Rhea" id="RHEA:22977"/>
    </physiologicalReaction>
</comment>
<comment type="subcellular location">
    <subcellularLocation>
        <location evidence="4">Endoplasmic reticulum membrane</location>
        <topology evidence="3">Multi-pass membrane protein</topology>
    </subcellularLocation>
    <subcellularLocation>
        <location evidence="4 5">Peroxisome membrane</location>
        <topology evidence="4">Peripheral membrane protein</topology>
    </subcellularLocation>
    <subcellularLocation>
        <location evidence="2">Cell membrane</location>
        <topology evidence="3">Multi-pass membrane protein</topology>
    </subcellularLocation>
    <subcellularLocation>
        <location evidence="4 5">Microsome</location>
    </subcellularLocation>
</comment>
<comment type="tissue specificity">
    <text evidence="5">Liver and kidney (at protein level).</text>
</comment>
<comment type="similarity">
    <text evidence="8">Belongs to the ATP-dependent AMP-binding enzyme family.</text>
</comment>
<accession>P97524</accession>
<dbReference type="EC" id="6.2.1.15" evidence="2"/>
<dbReference type="EC" id="6.2.1.3" evidence="5"/>
<dbReference type="EC" id="6.2.1.24" evidence="1"/>
<dbReference type="EC" id="6.2.1.7" evidence="1"/>
<dbReference type="EC" id="6.2.1.-" evidence="4 5"/>
<dbReference type="EMBL" id="D85100">
    <property type="protein sequence ID" value="BAA12722.1"/>
    <property type="molecule type" value="mRNA"/>
</dbReference>
<dbReference type="RefSeq" id="NP_113924.1">
    <property type="nucleotide sequence ID" value="NM_031736.1"/>
</dbReference>
<dbReference type="SMR" id="P97524"/>
<dbReference type="BioGRID" id="249304">
    <property type="interactions" value="1"/>
</dbReference>
<dbReference type="FunCoup" id="P97524">
    <property type="interactions" value="267"/>
</dbReference>
<dbReference type="IntAct" id="P97524">
    <property type="interactions" value="1"/>
</dbReference>
<dbReference type="STRING" id="10116.ENSRNOP00000059771"/>
<dbReference type="iPTMnet" id="P97524"/>
<dbReference type="PhosphoSitePlus" id="P97524"/>
<dbReference type="GeneID" id="65192"/>
<dbReference type="KEGG" id="rno:65192"/>
<dbReference type="UCSC" id="RGD:71103">
    <property type="organism name" value="rat"/>
</dbReference>
<dbReference type="AGR" id="RGD:71103"/>
<dbReference type="CTD" id="11001"/>
<dbReference type="RGD" id="71103">
    <property type="gene designation" value="Slc27a2"/>
</dbReference>
<dbReference type="InParanoid" id="P97524"/>
<dbReference type="OrthoDB" id="288590at2759"/>
<dbReference type="PhylomeDB" id="P97524"/>
<dbReference type="Reactome" id="R-RNO-193368">
    <property type="pathway name" value="Synthesis of bile acids and bile salts via 7alpha-hydroxycholesterol"/>
</dbReference>
<dbReference type="Reactome" id="R-RNO-193775">
    <property type="pathway name" value="Synthesis of bile acids and bile salts via 24-hydroxycholesterol"/>
</dbReference>
<dbReference type="Reactome" id="R-RNO-389599">
    <property type="pathway name" value="Alpha-oxidation of phytanate"/>
</dbReference>
<dbReference type="Reactome" id="R-RNO-390247">
    <property type="pathway name" value="Beta-oxidation of very long chain fatty acids"/>
</dbReference>
<dbReference type="Reactome" id="R-RNO-6798695">
    <property type="pathway name" value="Neutrophil degranulation"/>
</dbReference>
<dbReference type="Reactome" id="R-RNO-75105">
    <property type="pathway name" value="Fatty acyl-CoA biosynthesis"/>
</dbReference>
<dbReference type="Reactome" id="R-RNO-9033241">
    <property type="pathway name" value="Peroxisomal protein import"/>
</dbReference>
<dbReference type="PRO" id="PR:P97524"/>
<dbReference type="Proteomes" id="UP000002494">
    <property type="component" value="Unplaced"/>
</dbReference>
<dbReference type="GO" id="GO:0005783">
    <property type="term" value="C:endoplasmic reticulum"/>
    <property type="evidence" value="ECO:0000314"/>
    <property type="project" value="UniProtKB"/>
</dbReference>
<dbReference type="GO" id="GO:0005788">
    <property type="term" value="C:endoplasmic reticulum lumen"/>
    <property type="evidence" value="ECO:0000250"/>
    <property type="project" value="UniProtKB"/>
</dbReference>
<dbReference type="GO" id="GO:0005789">
    <property type="term" value="C:endoplasmic reticulum membrane"/>
    <property type="evidence" value="ECO:0000266"/>
    <property type="project" value="RGD"/>
</dbReference>
<dbReference type="GO" id="GO:0005778">
    <property type="term" value="C:peroxisomal membrane"/>
    <property type="evidence" value="ECO:0000314"/>
    <property type="project" value="UniProtKB"/>
</dbReference>
<dbReference type="GO" id="GO:0005777">
    <property type="term" value="C:peroxisome"/>
    <property type="evidence" value="ECO:0000314"/>
    <property type="project" value="RGD"/>
</dbReference>
<dbReference type="GO" id="GO:0005886">
    <property type="term" value="C:plasma membrane"/>
    <property type="evidence" value="ECO:0000266"/>
    <property type="project" value="RGD"/>
</dbReference>
<dbReference type="GO" id="GO:0047676">
    <property type="term" value="F:arachidonate-CoA ligase activity"/>
    <property type="evidence" value="ECO:0007669"/>
    <property type="project" value="UniProtKB-EC"/>
</dbReference>
<dbReference type="GO" id="GO:0005524">
    <property type="term" value="F:ATP binding"/>
    <property type="evidence" value="ECO:0007669"/>
    <property type="project" value="UniProtKB-KW"/>
</dbReference>
<dbReference type="GO" id="GO:0047747">
    <property type="term" value="F:cholate-CoA ligase activity"/>
    <property type="evidence" value="ECO:0007669"/>
    <property type="project" value="UniProtKB-EC"/>
</dbReference>
<dbReference type="GO" id="GO:0019899">
    <property type="term" value="F:enzyme binding"/>
    <property type="evidence" value="ECO:0000266"/>
    <property type="project" value="RGD"/>
</dbReference>
<dbReference type="GO" id="GO:0015245">
    <property type="term" value="F:fatty acid transmembrane transporter activity"/>
    <property type="evidence" value="ECO:0000266"/>
    <property type="project" value="RGD"/>
</dbReference>
<dbReference type="GO" id="GO:0005324">
    <property type="term" value="F:long-chain fatty acid transmembrane transporter activity"/>
    <property type="evidence" value="ECO:0000266"/>
    <property type="project" value="RGD"/>
</dbReference>
<dbReference type="GO" id="GO:0004467">
    <property type="term" value="F:long-chain fatty acid-CoA ligase activity"/>
    <property type="evidence" value="ECO:0000314"/>
    <property type="project" value="RGD"/>
</dbReference>
<dbReference type="GO" id="GO:0050197">
    <property type="term" value="F:phytanate-CoA ligase activity"/>
    <property type="evidence" value="ECO:0000266"/>
    <property type="project" value="RGD"/>
</dbReference>
<dbReference type="GO" id="GO:0070251">
    <property type="term" value="F:pristanate-CoA ligase activity"/>
    <property type="evidence" value="ECO:0000266"/>
    <property type="project" value="RGD"/>
</dbReference>
<dbReference type="GO" id="GO:0031957">
    <property type="term" value="F:very long-chain fatty acid-CoA ligase activity"/>
    <property type="evidence" value="ECO:0000315"/>
    <property type="project" value="UniProtKB"/>
</dbReference>
<dbReference type="GO" id="GO:0006699">
    <property type="term" value="P:bile acid biosynthetic process"/>
    <property type="evidence" value="ECO:0000266"/>
    <property type="project" value="RGD"/>
</dbReference>
<dbReference type="GO" id="GO:0008206">
    <property type="term" value="P:bile acid metabolic process"/>
    <property type="evidence" value="ECO:0000318"/>
    <property type="project" value="GO_Central"/>
</dbReference>
<dbReference type="GO" id="GO:0001561">
    <property type="term" value="P:fatty acid alpha-oxidation"/>
    <property type="evidence" value="ECO:0000266"/>
    <property type="project" value="RGD"/>
</dbReference>
<dbReference type="GO" id="GO:0006635">
    <property type="term" value="P:fatty acid beta-oxidation"/>
    <property type="evidence" value="ECO:0000266"/>
    <property type="project" value="RGD"/>
</dbReference>
<dbReference type="GO" id="GO:0015908">
    <property type="term" value="P:fatty acid transport"/>
    <property type="evidence" value="ECO:0000266"/>
    <property type="project" value="RGD"/>
</dbReference>
<dbReference type="GO" id="GO:0044539">
    <property type="term" value="P:long-chain fatty acid import into cell"/>
    <property type="evidence" value="ECO:0000266"/>
    <property type="project" value="RGD"/>
</dbReference>
<dbReference type="GO" id="GO:0001676">
    <property type="term" value="P:long-chain fatty acid metabolic process"/>
    <property type="evidence" value="ECO:0000315"/>
    <property type="project" value="UniProtKB"/>
</dbReference>
<dbReference type="GO" id="GO:0097089">
    <property type="term" value="P:methyl-branched fatty acid metabolic process"/>
    <property type="evidence" value="ECO:0000266"/>
    <property type="project" value="RGD"/>
</dbReference>
<dbReference type="GO" id="GO:0042760">
    <property type="term" value="P:very long-chain fatty acid catabolic process"/>
    <property type="evidence" value="ECO:0000266"/>
    <property type="project" value="RGD"/>
</dbReference>
<dbReference type="GO" id="GO:0000038">
    <property type="term" value="P:very long-chain fatty acid metabolic process"/>
    <property type="evidence" value="ECO:0000266"/>
    <property type="project" value="RGD"/>
</dbReference>
<dbReference type="CDD" id="cd05938">
    <property type="entry name" value="hsFATP2a_ACSVL_like"/>
    <property type="match status" value="1"/>
</dbReference>
<dbReference type="FunFam" id="3.30.300.30:FF:000002">
    <property type="entry name" value="Long-chain fatty acid transport protein 1"/>
    <property type="match status" value="1"/>
</dbReference>
<dbReference type="FunFam" id="3.40.50.12780:FF:000005">
    <property type="entry name" value="Solute carrier family 27 member 6"/>
    <property type="match status" value="1"/>
</dbReference>
<dbReference type="Gene3D" id="3.30.300.30">
    <property type="match status" value="1"/>
</dbReference>
<dbReference type="Gene3D" id="3.40.50.12780">
    <property type="entry name" value="N-terminal domain of ligase-like"/>
    <property type="match status" value="1"/>
</dbReference>
<dbReference type="InterPro" id="IPR025110">
    <property type="entry name" value="AMP-bd_C"/>
</dbReference>
<dbReference type="InterPro" id="IPR045851">
    <property type="entry name" value="AMP-bd_C_sf"/>
</dbReference>
<dbReference type="InterPro" id="IPR020845">
    <property type="entry name" value="AMP-binding_CS"/>
</dbReference>
<dbReference type="InterPro" id="IPR000873">
    <property type="entry name" value="AMP-dep_synth/lig_dom"/>
</dbReference>
<dbReference type="InterPro" id="IPR042099">
    <property type="entry name" value="ANL_N_sf"/>
</dbReference>
<dbReference type="NCBIfam" id="NF006134">
    <property type="entry name" value="PRK08279.1"/>
    <property type="match status" value="1"/>
</dbReference>
<dbReference type="PANTHER" id="PTHR43107">
    <property type="entry name" value="LONG-CHAIN FATTY ACID TRANSPORT PROTEIN"/>
    <property type="match status" value="1"/>
</dbReference>
<dbReference type="PANTHER" id="PTHR43107:SF4">
    <property type="entry name" value="LONG-CHAIN FATTY ACID TRANSPORT PROTEIN 2"/>
    <property type="match status" value="1"/>
</dbReference>
<dbReference type="Pfam" id="PF00501">
    <property type="entry name" value="AMP-binding"/>
    <property type="match status" value="1"/>
</dbReference>
<dbReference type="Pfam" id="PF13193">
    <property type="entry name" value="AMP-binding_C"/>
    <property type="match status" value="1"/>
</dbReference>
<dbReference type="SUPFAM" id="SSF56801">
    <property type="entry name" value="Acetyl-CoA synthetase-like"/>
    <property type="match status" value="1"/>
</dbReference>
<dbReference type="PROSITE" id="PS00455">
    <property type="entry name" value="AMP_BINDING"/>
    <property type="match status" value="1"/>
</dbReference>